<gene>
    <name type="ordered locus">Csac_2148</name>
</gene>
<feature type="chain" id="PRO_0000336152" description="UPF0102 protein Csac_2148">
    <location>
        <begin position="1"/>
        <end position="118"/>
    </location>
</feature>
<sequence length="118" mass="13925">MNKRELGNSGEEKAVEFLKKMGYEILHRNFRCKLGEVDIIAKEGNTIVFVEVKTRRSLKFGYPSEAITMTKQRHLKRVAEYFVQRQKAKNCMYRFDVVEVYMNVKNEVLDINLIKNAF</sequence>
<name>Y2148_CALS8</name>
<proteinExistence type="inferred from homology"/>
<evidence type="ECO:0000255" key="1">
    <source>
        <dbReference type="HAMAP-Rule" id="MF_00048"/>
    </source>
</evidence>
<organism>
    <name type="scientific">Caldicellulosiruptor saccharolyticus (strain ATCC 43494 / DSM 8903 / Tp8T 6331)</name>
    <dbReference type="NCBI Taxonomy" id="351627"/>
    <lineage>
        <taxon>Bacteria</taxon>
        <taxon>Bacillati</taxon>
        <taxon>Bacillota</taxon>
        <taxon>Bacillota incertae sedis</taxon>
        <taxon>Caldicellulosiruptorales</taxon>
        <taxon>Caldicellulosiruptoraceae</taxon>
        <taxon>Caldicellulosiruptor</taxon>
    </lineage>
</organism>
<reference key="1">
    <citation type="submission" date="2007-04" db="EMBL/GenBank/DDBJ databases">
        <title>Genome sequence of the thermophilic hydrogen-producing bacterium Caldicellulosiruptor saccharolyticus DSM 8903.</title>
        <authorList>
            <person name="Copeland A."/>
            <person name="Lucas S."/>
            <person name="Lapidus A."/>
            <person name="Barry K."/>
            <person name="Detter J.C."/>
            <person name="Glavina del Rio T."/>
            <person name="Hammon N."/>
            <person name="Israni S."/>
            <person name="Dalin E."/>
            <person name="Tice H."/>
            <person name="Pitluck S."/>
            <person name="Kiss H."/>
            <person name="Brettin T."/>
            <person name="Bruce D."/>
            <person name="Han C."/>
            <person name="Schmutz J."/>
            <person name="Larimer F."/>
            <person name="Land M."/>
            <person name="Hauser L."/>
            <person name="Kyrpides N."/>
            <person name="Lykidis A."/>
            <person name="van de Werken H.J.G."/>
            <person name="Verhaart M.R.A."/>
            <person name="VanFossen A.L."/>
            <person name="Lewis D.L."/>
            <person name="Nichols J.D."/>
            <person name="Goorissen H.P."/>
            <person name="van Niel E.W.J."/>
            <person name="Stams F.J.M."/>
            <person name="Willquist K.U."/>
            <person name="Ward D.E."/>
            <person name="van der Oost J."/>
            <person name="Kelly R.M."/>
            <person name="Kengen S.M.W."/>
            <person name="Richardson P."/>
        </authorList>
    </citation>
    <scope>NUCLEOTIDE SEQUENCE [LARGE SCALE GENOMIC DNA]</scope>
    <source>
        <strain>ATCC 43494 / DSM 8903 / Tp8T 6331</strain>
    </source>
</reference>
<protein>
    <recommendedName>
        <fullName evidence="1">UPF0102 protein Csac_2148</fullName>
    </recommendedName>
</protein>
<comment type="similarity">
    <text evidence="1">Belongs to the UPF0102 family.</text>
</comment>
<accession>A4XLE5</accession>
<dbReference type="EMBL" id="CP000679">
    <property type="protein sequence ID" value="ABP67730.1"/>
    <property type="molecule type" value="Genomic_DNA"/>
</dbReference>
<dbReference type="RefSeq" id="WP_011917661.1">
    <property type="nucleotide sequence ID" value="NC_009437.1"/>
</dbReference>
<dbReference type="SMR" id="A4XLE5"/>
<dbReference type="STRING" id="351627.Csac_2148"/>
<dbReference type="KEGG" id="csc:Csac_2148"/>
<dbReference type="eggNOG" id="COG0792">
    <property type="taxonomic scope" value="Bacteria"/>
</dbReference>
<dbReference type="HOGENOM" id="CLU_115353_3_1_9"/>
<dbReference type="OrthoDB" id="9802516at2"/>
<dbReference type="Proteomes" id="UP000000256">
    <property type="component" value="Chromosome"/>
</dbReference>
<dbReference type="GO" id="GO:0003676">
    <property type="term" value="F:nucleic acid binding"/>
    <property type="evidence" value="ECO:0007669"/>
    <property type="project" value="InterPro"/>
</dbReference>
<dbReference type="CDD" id="cd20736">
    <property type="entry name" value="PoNe_Nuclease"/>
    <property type="match status" value="1"/>
</dbReference>
<dbReference type="Gene3D" id="3.40.1350.10">
    <property type="match status" value="1"/>
</dbReference>
<dbReference type="HAMAP" id="MF_00048">
    <property type="entry name" value="UPF0102"/>
    <property type="match status" value="1"/>
</dbReference>
<dbReference type="InterPro" id="IPR011335">
    <property type="entry name" value="Restrct_endonuc-II-like"/>
</dbReference>
<dbReference type="InterPro" id="IPR011856">
    <property type="entry name" value="tRNA_endonuc-like_dom_sf"/>
</dbReference>
<dbReference type="InterPro" id="IPR003509">
    <property type="entry name" value="UPF0102_YraN-like"/>
</dbReference>
<dbReference type="NCBIfam" id="NF009150">
    <property type="entry name" value="PRK12497.1-3"/>
    <property type="match status" value="1"/>
</dbReference>
<dbReference type="NCBIfam" id="NF009154">
    <property type="entry name" value="PRK12497.3-3"/>
    <property type="match status" value="1"/>
</dbReference>
<dbReference type="NCBIfam" id="TIGR00252">
    <property type="entry name" value="YraN family protein"/>
    <property type="match status" value="1"/>
</dbReference>
<dbReference type="PANTHER" id="PTHR34039">
    <property type="entry name" value="UPF0102 PROTEIN YRAN"/>
    <property type="match status" value="1"/>
</dbReference>
<dbReference type="PANTHER" id="PTHR34039:SF1">
    <property type="entry name" value="UPF0102 PROTEIN YRAN"/>
    <property type="match status" value="1"/>
</dbReference>
<dbReference type="Pfam" id="PF02021">
    <property type="entry name" value="UPF0102"/>
    <property type="match status" value="1"/>
</dbReference>
<dbReference type="SUPFAM" id="SSF52980">
    <property type="entry name" value="Restriction endonuclease-like"/>
    <property type="match status" value="1"/>
</dbReference>